<comment type="function">
    <text evidence="1">Responsible for synthesis of pseudouridine from uracil-13 in transfer RNAs.</text>
</comment>
<comment type="catalytic activity">
    <reaction evidence="1">
        <text>uridine(13) in tRNA = pseudouridine(13) in tRNA</text>
        <dbReference type="Rhea" id="RHEA:42540"/>
        <dbReference type="Rhea" id="RHEA-COMP:10105"/>
        <dbReference type="Rhea" id="RHEA-COMP:10106"/>
        <dbReference type="ChEBI" id="CHEBI:65314"/>
        <dbReference type="ChEBI" id="CHEBI:65315"/>
        <dbReference type="EC" id="5.4.99.27"/>
    </reaction>
</comment>
<comment type="similarity">
    <text evidence="1">Belongs to the pseudouridine synthase TruD family.</text>
</comment>
<reference key="1">
    <citation type="journal article" date="2008" name="DNA Res.">
        <title>Complete genome sequence and comparative analysis of the wild-type commensal Escherichia coli strain SE11 isolated from a healthy adult.</title>
        <authorList>
            <person name="Oshima K."/>
            <person name="Toh H."/>
            <person name="Ogura Y."/>
            <person name="Sasamoto H."/>
            <person name="Morita H."/>
            <person name="Park S.-H."/>
            <person name="Ooka T."/>
            <person name="Iyoda S."/>
            <person name="Taylor T.D."/>
            <person name="Hayashi T."/>
            <person name="Itoh K."/>
            <person name="Hattori M."/>
        </authorList>
    </citation>
    <scope>NUCLEOTIDE SEQUENCE [LARGE SCALE GENOMIC DNA]</scope>
    <source>
        <strain>SE11</strain>
    </source>
</reference>
<evidence type="ECO:0000255" key="1">
    <source>
        <dbReference type="HAMAP-Rule" id="MF_01082"/>
    </source>
</evidence>
<name>TRUD_ECOSE</name>
<sequence length="349" mass="39077">MIEFDNLTYLHGKPQGTGLLKANPEDFVVVEDLGFEPDGEGEHILVRILKNGCNTRFVADALAKFLKIHAREVSFAGQKDKHAVTEQWLCARVPGKEMPDLSAFQLEGCQVLEYARHKRKLRLGALKGNAFTLVLREVSNRDDVEQRLIDICVKGVPNYFGAQRFGIGGSNLQGALRWAQTNTPVRDRNKRSFWLSAARSALFNQIVAERLKKADVNQVVDGDALQLAGRGSWFVATTEELAELQRRVNDKELMITAALPGSGEWGTQREALAFEKAAVAAETELQALLVREKVEAARRAMLLYPQQLSWNWWDDVTVEIRFWLPAGSFATSVVRELINTTGDYAHIAE</sequence>
<dbReference type="EC" id="5.4.99.27" evidence="1"/>
<dbReference type="EMBL" id="AP009240">
    <property type="protein sequence ID" value="BAG78521.1"/>
    <property type="molecule type" value="Genomic_DNA"/>
</dbReference>
<dbReference type="RefSeq" id="WP_000568921.1">
    <property type="nucleotide sequence ID" value="NC_011415.1"/>
</dbReference>
<dbReference type="SMR" id="B6I6D5"/>
<dbReference type="KEGG" id="ecy:ECSE_2997"/>
<dbReference type="HOGENOM" id="CLU_005281_4_0_6"/>
<dbReference type="Proteomes" id="UP000008199">
    <property type="component" value="Chromosome"/>
</dbReference>
<dbReference type="GO" id="GO:0005829">
    <property type="term" value="C:cytosol"/>
    <property type="evidence" value="ECO:0007669"/>
    <property type="project" value="TreeGrafter"/>
</dbReference>
<dbReference type="GO" id="GO:0003723">
    <property type="term" value="F:RNA binding"/>
    <property type="evidence" value="ECO:0007669"/>
    <property type="project" value="InterPro"/>
</dbReference>
<dbReference type="GO" id="GO:0160150">
    <property type="term" value="F:tRNA pseudouridine(13) synthase activity"/>
    <property type="evidence" value="ECO:0007669"/>
    <property type="project" value="UniProtKB-EC"/>
</dbReference>
<dbReference type="GO" id="GO:0031119">
    <property type="term" value="P:tRNA pseudouridine synthesis"/>
    <property type="evidence" value="ECO:0007669"/>
    <property type="project" value="UniProtKB-UniRule"/>
</dbReference>
<dbReference type="CDD" id="cd02575">
    <property type="entry name" value="PseudoU_synth_EcTruD"/>
    <property type="match status" value="1"/>
</dbReference>
<dbReference type="FunFam" id="3.30.2340.10:FF:000001">
    <property type="entry name" value="tRNA pseudouridine synthase D"/>
    <property type="match status" value="1"/>
</dbReference>
<dbReference type="FunFam" id="3.30.2350.20:FF:000001">
    <property type="entry name" value="tRNA pseudouridine synthase D"/>
    <property type="match status" value="1"/>
</dbReference>
<dbReference type="Gene3D" id="3.30.2350.20">
    <property type="entry name" value="TruD, catalytic domain"/>
    <property type="match status" value="1"/>
</dbReference>
<dbReference type="Gene3D" id="3.30.2340.10">
    <property type="entry name" value="TruD, insertion domain"/>
    <property type="match status" value="1"/>
</dbReference>
<dbReference type="HAMAP" id="MF_01082">
    <property type="entry name" value="TruD"/>
    <property type="match status" value="1"/>
</dbReference>
<dbReference type="InterPro" id="IPR020103">
    <property type="entry name" value="PsdUridine_synth_cat_dom_sf"/>
</dbReference>
<dbReference type="InterPro" id="IPR001656">
    <property type="entry name" value="PsdUridine_synth_TruD"/>
</dbReference>
<dbReference type="InterPro" id="IPR020119">
    <property type="entry name" value="PsdUridine_synth_TruD_CS"/>
</dbReference>
<dbReference type="InterPro" id="IPR011760">
    <property type="entry name" value="PsdUridine_synth_TruD_insert"/>
</dbReference>
<dbReference type="InterPro" id="IPR042214">
    <property type="entry name" value="TruD_catalytic"/>
</dbReference>
<dbReference type="InterPro" id="IPR043165">
    <property type="entry name" value="TruD_insert_sf"/>
</dbReference>
<dbReference type="InterPro" id="IPR050170">
    <property type="entry name" value="TruD_pseudoU_synthase"/>
</dbReference>
<dbReference type="NCBIfam" id="NF002155">
    <property type="entry name" value="PRK00984.1-4"/>
    <property type="match status" value="1"/>
</dbReference>
<dbReference type="NCBIfam" id="TIGR00094">
    <property type="entry name" value="tRNA_TruD_broad"/>
    <property type="match status" value="1"/>
</dbReference>
<dbReference type="PANTHER" id="PTHR47811">
    <property type="entry name" value="TRNA PSEUDOURIDINE SYNTHASE D"/>
    <property type="match status" value="1"/>
</dbReference>
<dbReference type="PANTHER" id="PTHR47811:SF1">
    <property type="entry name" value="TRNA PSEUDOURIDINE SYNTHASE D"/>
    <property type="match status" value="1"/>
</dbReference>
<dbReference type="Pfam" id="PF01142">
    <property type="entry name" value="TruD"/>
    <property type="match status" value="2"/>
</dbReference>
<dbReference type="SUPFAM" id="SSF55120">
    <property type="entry name" value="Pseudouridine synthase"/>
    <property type="match status" value="1"/>
</dbReference>
<dbReference type="PROSITE" id="PS50984">
    <property type="entry name" value="TRUD"/>
    <property type="match status" value="1"/>
</dbReference>
<dbReference type="PROSITE" id="PS01268">
    <property type="entry name" value="UPF0024"/>
    <property type="match status" value="1"/>
</dbReference>
<gene>
    <name evidence="1" type="primary">truD</name>
    <name type="ordered locus">ECSE_2997</name>
</gene>
<proteinExistence type="inferred from homology"/>
<accession>B6I6D5</accession>
<keyword id="KW-0413">Isomerase</keyword>
<keyword id="KW-0819">tRNA processing</keyword>
<organism>
    <name type="scientific">Escherichia coli (strain SE11)</name>
    <dbReference type="NCBI Taxonomy" id="409438"/>
    <lineage>
        <taxon>Bacteria</taxon>
        <taxon>Pseudomonadati</taxon>
        <taxon>Pseudomonadota</taxon>
        <taxon>Gammaproteobacteria</taxon>
        <taxon>Enterobacterales</taxon>
        <taxon>Enterobacteriaceae</taxon>
        <taxon>Escherichia</taxon>
    </lineage>
</organism>
<feature type="chain" id="PRO_1000136835" description="tRNA pseudouridine synthase D">
    <location>
        <begin position="1"/>
        <end position="349"/>
    </location>
</feature>
<feature type="domain" description="TRUD" evidence="1">
    <location>
        <begin position="155"/>
        <end position="303"/>
    </location>
</feature>
<feature type="active site" description="Nucleophile" evidence="1">
    <location>
        <position position="80"/>
    </location>
</feature>
<feature type="binding site" evidence="1">
    <location>
        <position position="27"/>
    </location>
    <ligand>
        <name>substrate</name>
    </ligand>
</feature>
<feature type="binding site" evidence="1">
    <location>
        <position position="129"/>
    </location>
    <ligand>
        <name>substrate</name>
    </ligand>
</feature>
<feature type="binding site" evidence="1">
    <location>
        <position position="329"/>
    </location>
    <ligand>
        <name>substrate</name>
    </ligand>
</feature>
<protein>
    <recommendedName>
        <fullName evidence="1">tRNA pseudouridine synthase D</fullName>
        <ecNumber evidence="1">5.4.99.27</ecNumber>
    </recommendedName>
    <alternativeName>
        <fullName evidence="1">tRNA pseudouridine(13) synthase</fullName>
    </alternativeName>
    <alternativeName>
        <fullName evidence="1">tRNA pseudouridylate synthase D</fullName>
    </alternativeName>
    <alternativeName>
        <fullName evidence="1">tRNA-uridine isomerase D</fullName>
    </alternativeName>
</protein>